<keyword id="KW-0029">Amino-acid transport</keyword>
<keyword id="KW-0050">Antiport</keyword>
<keyword id="KW-1003">Cell membrane</keyword>
<keyword id="KW-0472">Membrane</keyword>
<keyword id="KW-0812">Transmembrane</keyword>
<keyword id="KW-1133">Transmembrane helix</keyword>
<keyword id="KW-0813">Transport</keyword>
<dbReference type="EMBL" id="AJ001330">
    <property type="protein sequence ID" value="CAA04686.1"/>
    <property type="molecule type" value="Genomic_DNA"/>
</dbReference>
<dbReference type="PIR" id="T46745">
    <property type="entry name" value="T46745"/>
</dbReference>
<dbReference type="SMR" id="O53092"/>
<dbReference type="GO" id="GO:0005886">
    <property type="term" value="C:plasma membrane"/>
    <property type="evidence" value="ECO:0007669"/>
    <property type="project" value="UniProtKB-SubCell"/>
</dbReference>
<dbReference type="GO" id="GO:0043858">
    <property type="term" value="F:arginine:ornithine antiporter activity"/>
    <property type="evidence" value="ECO:0007669"/>
    <property type="project" value="InterPro"/>
</dbReference>
<dbReference type="GO" id="GO:0006527">
    <property type="term" value="P:arginine catabolic process"/>
    <property type="evidence" value="ECO:0007669"/>
    <property type="project" value="InterPro"/>
</dbReference>
<dbReference type="GO" id="GO:1903826">
    <property type="term" value="P:L-arginine transmembrane transport"/>
    <property type="evidence" value="ECO:0007669"/>
    <property type="project" value="InterPro"/>
</dbReference>
<dbReference type="Gene3D" id="1.20.1740.10">
    <property type="entry name" value="Amino acid/polyamine transporter I"/>
    <property type="match status" value="1"/>
</dbReference>
<dbReference type="InterPro" id="IPR002293">
    <property type="entry name" value="AA/rel_permease1"/>
</dbReference>
<dbReference type="InterPro" id="IPR004754">
    <property type="entry name" value="Amino_acid_antiprt"/>
</dbReference>
<dbReference type="InterPro" id="IPR050367">
    <property type="entry name" value="APC_superfamily"/>
</dbReference>
<dbReference type="InterPro" id="IPR022461">
    <property type="entry name" value="Arg/Orn_antiprt_ArcD"/>
</dbReference>
<dbReference type="NCBIfam" id="TIGR00905">
    <property type="entry name" value="2A0302"/>
    <property type="match status" value="1"/>
</dbReference>
<dbReference type="NCBIfam" id="TIGR03810">
    <property type="entry name" value="arg_ornith_anti"/>
    <property type="match status" value="1"/>
</dbReference>
<dbReference type="PANTHER" id="PTHR42770">
    <property type="entry name" value="AMINO ACID TRANSPORTER-RELATED"/>
    <property type="match status" value="1"/>
</dbReference>
<dbReference type="PANTHER" id="PTHR42770:SF4">
    <property type="entry name" value="ARGININE_ORNITHINE ANTIPORTER-RELATED"/>
    <property type="match status" value="1"/>
</dbReference>
<dbReference type="Pfam" id="PF13520">
    <property type="entry name" value="AA_permease_2"/>
    <property type="match status" value="1"/>
</dbReference>
<dbReference type="PIRSF" id="PIRSF006060">
    <property type="entry name" value="AA_transporter"/>
    <property type="match status" value="1"/>
</dbReference>
<proteinExistence type="inferred from homology"/>
<sequence>MTEEKPAKKIGLLALIALVISSSIGSGVFGLTSDLASASAPGPVLIAWVIVGFGILMLALSLNNLLMKEPELEGIFSYAEKGFGPFAGFISGWGYWLSAWLGNVTFATILMSALGYFFPIFKSRQNLPSILVASVLSWSLTYFVNRGVEGAAAINTLVTICKLIPLFVFIIFGIVLFKGHLFTQAFWNNMSSSFVAGDVMSQIKNCMMVMMWVFVGIEGASMLSARAEKKSDAGKATILGLVSLLAIYILASVLPYGYLTQDQLASIKQPAMLYIFEQMVGTWGGYFIGVGLIISILGAWLSWTMLPAETMLLMAKQNLLPAYFGRVNKKKAPTFALVVTAGLIQVFLFTLLFTTKAYNFAYSLCTASIIVCYMLVAAYQIKYSWAHLQEKGNRQQLLIGVLALLFEIAGILMAGVSYLLLCFIAYIPGIYFYGRARKNNGHQHFLSKGEWLITTIIVIGAIIGIWLVVSGKIVI</sequence>
<name>ARCD_LATSK</name>
<feature type="chain" id="PRO_0000054238" description="Arginine/ornithine antiporter">
    <location>
        <begin position="1"/>
        <end position="475"/>
    </location>
</feature>
<feature type="transmembrane region" description="Helical" evidence="2">
    <location>
        <begin position="10"/>
        <end position="30"/>
    </location>
</feature>
<feature type="transmembrane region" description="Helical" evidence="2">
    <location>
        <begin position="42"/>
        <end position="62"/>
    </location>
</feature>
<feature type="transmembrane region" description="Helical" evidence="2">
    <location>
        <begin position="74"/>
        <end position="94"/>
    </location>
</feature>
<feature type="transmembrane region" description="Helical" evidence="2">
    <location>
        <begin position="101"/>
        <end position="121"/>
    </location>
</feature>
<feature type="transmembrane region" description="Helical" evidence="2">
    <location>
        <begin position="157"/>
        <end position="177"/>
    </location>
</feature>
<feature type="transmembrane region" description="Helical" evidence="2">
    <location>
        <begin position="205"/>
        <end position="225"/>
    </location>
</feature>
<feature type="transmembrane region" description="Helical" evidence="2">
    <location>
        <begin position="238"/>
        <end position="258"/>
    </location>
</feature>
<feature type="transmembrane region" description="Helical" evidence="2">
    <location>
        <begin position="283"/>
        <end position="303"/>
    </location>
</feature>
<feature type="transmembrane region" description="Helical" evidence="2">
    <location>
        <begin position="333"/>
        <end position="353"/>
    </location>
</feature>
<feature type="transmembrane region" description="Helical" evidence="2">
    <location>
        <begin position="361"/>
        <end position="381"/>
    </location>
</feature>
<feature type="transmembrane region" description="Helical" evidence="2">
    <location>
        <begin position="397"/>
        <end position="417"/>
    </location>
</feature>
<feature type="transmembrane region" description="Helical" evidence="2">
    <location>
        <begin position="451"/>
        <end position="471"/>
    </location>
</feature>
<protein>
    <recommendedName>
        <fullName evidence="1">Arginine/ornithine antiporter</fullName>
    </recommendedName>
</protein>
<accession>O53092</accession>
<comment type="function">
    <text evidence="1">Catalyzes electroneutral exchange between L-arginine and L-ornithine.</text>
</comment>
<comment type="catalytic activity">
    <reaction evidence="1">
        <text>L-ornithine(in) + L-arginine(out) = L-ornithine(out) + L-arginine(in)</text>
        <dbReference type="Rhea" id="RHEA:34991"/>
        <dbReference type="ChEBI" id="CHEBI:32682"/>
        <dbReference type="ChEBI" id="CHEBI:46911"/>
    </reaction>
</comment>
<comment type="subcellular location">
    <subcellularLocation>
        <location evidence="3">Cell membrane</location>
        <topology evidence="2">Multi-pass membrane protein</topology>
    </subcellularLocation>
</comment>
<comment type="similarity">
    <text evidence="3">Belongs to the amino acid-polyamine-organocation (APC) superfamily. Basic amino acid/polyamine antiporter (APA) (TC 2.A.3.2) family.</text>
</comment>
<gene>
    <name type="primary">arcD</name>
</gene>
<organism>
    <name type="scientific">Latilactobacillus sakei</name>
    <name type="common">Lactobacillus sakei</name>
    <dbReference type="NCBI Taxonomy" id="1599"/>
    <lineage>
        <taxon>Bacteria</taxon>
        <taxon>Bacillati</taxon>
        <taxon>Bacillota</taxon>
        <taxon>Bacilli</taxon>
        <taxon>Lactobacillales</taxon>
        <taxon>Lactobacillaceae</taxon>
        <taxon>Latilactobacillus</taxon>
    </lineage>
</organism>
<evidence type="ECO:0000250" key="1">
    <source>
        <dbReference type="UniProtKB" id="A2RNI5"/>
    </source>
</evidence>
<evidence type="ECO:0000255" key="2"/>
<evidence type="ECO:0000305" key="3"/>
<reference key="1">
    <citation type="journal article" date="1998" name="J. Bacteriol.">
        <title>Structural and functional analysis of the gene cluster encoding the enzymes of the arginine deiminase pathway of Lactobacillus sakei.</title>
        <authorList>
            <person name="Zuniga M."/>
            <person name="Champomier-Verges M.-C."/>
            <person name="Zagorec M."/>
            <person name="Perez-Martinez G."/>
        </authorList>
    </citation>
    <scope>NUCLEOTIDE SEQUENCE [GENOMIC DNA]</scope>
</reference>